<gene>
    <name type="primary">NDUFB8</name>
</gene>
<evidence type="ECO:0000250" key="1"/>
<evidence type="ECO:0000250" key="2">
    <source>
        <dbReference type="UniProtKB" id="O95169"/>
    </source>
</evidence>
<evidence type="ECO:0000255" key="3"/>
<evidence type="ECO:0000305" key="4"/>
<sequence length="186" mass="21903">MAVARTGVLGVQWLQRASWNMMPLGARTASHMTKDMFPGPYPRTPEERAAAAKKYNMRVEDYEPYPDDGMGYGDYPKLPDRSQHERDPWYSWDQPDLRLNWGEPMHWHLDMFNRNRVDTSPIPVSWNVMCMQLFGFLAFMIFMCWVGEVYPVYQPVGPKQYPYNNLYLERGGDPSKEPERVVHYEI</sequence>
<accession>P0CB86</accession>
<accession>Q0MQE5</accession>
<accession>Q5NVJ1</accession>
<accession>Q5R4A8</accession>
<comment type="function">
    <text evidence="2">Accessory subunit of the mitochondrial membrane respiratory chain NADH dehydrogenase (Complex I), that is believed not to be involved in catalysis. Complex I functions in the transfer of electrons from NADH to the respiratory chain. The immediate electron acceptor for the enzyme is believed to be ubiquinone.</text>
</comment>
<comment type="subunit">
    <text evidence="2">Complex I is composed of 45 different subunits.</text>
</comment>
<comment type="subcellular location">
    <subcellularLocation>
        <location evidence="2">Mitochondrion inner membrane</location>
        <topology evidence="3">Single-pass membrane protein</topology>
        <orientation evidence="2">Matrix side</orientation>
    </subcellularLocation>
</comment>
<comment type="similarity">
    <text evidence="4">Belongs to the complex I NDUFB8 subunit family.</text>
</comment>
<protein>
    <recommendedName>
        <fullName>NADH dehydrogenase [ubiquinone] 1 beta subcomplex subunit 8, mitochondrial</fullName>
    </recommendedName>
    <alternativeName>
        <fullName>Complex I-ASHI</fullName>
        <shortName>CI-ASHI</shortName>
    </alternativeName>
    <alternativeName>
        <fullName>NADH-ubiquinone oxidoreductase ASHI subunit</fullName>
    </alternativeName>
</protein>
<name>NDUB8_PONPY</name>
<organism>
    <name type="scientific">Pongo pygmaeus</name>
    <name type="common">Bornean orangutan</name>
    <dbReference type="NCBI Taxonomy" id="9600"/>
    <lineage>
        <taxon>Eukaryota</taxon>
        <taxon>Metazoa</taxon>
        <taxon>Chordata</taxon>
        <taxon>Craniata</taxon>
        <taxon>Vertebrata</taxon>
        <taxon>Euteleostomi</taxon>
        <taxon>Mammalia</taxon>
        <taxon>Eutheria</taxon>
        <taxon>Euarchontoglires</taxon>
        <taxon>Primates</taxon>
        <taxon>Haplorrhini</taxon>
        <taxon>Catarrhini</taxon>
        <taxon>Hominidae</taxon>
        <taxon>Pongo</taxon>
    </lineage>
</organism>
<feature type="transit peptide" description="Mitochondrion" evidence="1">
    <location>
        <begin position="1"/>
        <end position="28"/>
    </location>
</feature>
<feature type="chain" id="PRO_0000389249" description="NADH dehydrogenase [ubiquinone] 1 beta subcomplex subunit 8, mitochondrial">
    <location>
        <begin position="29"/>
        <end position="186"/>
    </location>
</feature>
<feature type="transmembrane region" description="Helical" evidence="3">
    <location>
        <begin position="133"/>
        <end position="153"/>
    </location>
</feature>
<proteinExistence type="evidence at transcript level"/>
<dbReference type="EMBL" id="DQ885689">
    <property type="protein sequence ID" value="ABH12198.1"/>
    <property type="molecule type" value="mRNA"/>
</dbReference>
<dbReference type="SMR" id="P0CB86"/>
<dbReference type="GO" id="GO:0005743">
    <property type="term" value="C:mitochondrial inner membrane"/>
    <property type="evidence" value="ECO:0007669"/>
    <property type="project" value="UniProtKB-SubCell"/>
</dbReference>
<dbReference type="GO" id="GO:0045271">
    <property type="term" value="C:respiratory chain complex I"/>
    <property type="evidence" value="ECO:0000250"/>
    <property type="project" value="UniProtKB"/>
</dbReference>
<dbReference type="GO" id="GO:0006120">
    <property type="term" value="P:mitochondrial electron transport, NADH to ubiquinone"/>
    <property type="evidence" value="ECO:0007669"/>
    <property type="project" value="InterPro"/>
</dbReference>
<dbReference type="InterPro" id="IPR008699">
    <property type="entry name" value="NDUFB8"/>
</dbReference>
<dbReference type="InterPro" id="IPR016551">
    <property type="entry name" value="Ndufb8_metazoa"/>
</dbReference>
<dbReference type="PANTHER" id="PTHR12840:SF2">
    <property type="entry name" value="NADH DEHYDROGENASE [UBIQUINONE] 1 BETA SUBCOMPLEX SUBUNIT 8, MITOCHONDRIAL"/>
    <property type="match status" value="1"/>
</dbReference>
<dbReference type="PANTHER" id="PTHR12840">
    <property type="entry name" value="NADH-UBIQUINONE OXIDOREDUCTASE ASHI SUBUNIT"/>
    <property type="match status" value="1"/>
</dbReference>
<dbReference type="Pfam" id="PF05821">
    <property type="entry name" value="NDUF_B8"/>
    <property type="match status" value="1"/>
</dbReference>
<dbReference type="PIRSF" id="PIRSF009288">
    <property type="entry name" value="NDUB8"/>
    <property type="match status" value="1"/>
</dbReference>
<reference key="1">
    <citation type="journal article" date="2006" name="Gene">
        <title>Adaptive selection of mitochondrial complex I subunits during primate radiation.</title>
        <authorList>
            <person name="Mishmar D."/>
            <person name="Ruiz-Pesini E."/>
            <person name="Mondragon-Palomino M."/>
            <person name="Procaccio V."/>
            <person name="Gaut B."/>
            <person name="Wallace D.C."/>
        </authorList>
    </citation>
    <scope>NUCLEOTIDE SEQUENCE [MRNA]</scope>
</reference>
<keyword id="KW-0249">Electron transport</keyword>
<keyword id="KW-0472">Membrane</keyword>
<keyword id="KW-0496">Mitochondrion</keyword>
<keyword id="KW-0999">Mitochondrion inner membrane</keyword>
<keyword id="KW-0679">Respiratory chain</keyword>
<keyword id="KW-0809">Transit peptide</keyword>
<keyword id="KW-0812">Transmembrane</keyword>
<keyword id="KW-1133">Transmembrane helix</keyword>
<keyword id="KW-0813">Transport</keyword>